<evidence type="ECO:0000255" key="1"/>
<evidence type="ECO:0000305" key="2"/>
<reference key="1">
    <citation type="journal article" date="2002" name="Proc. Natl. Acad. Sci. U.S.A.">
        <title>The Brucella suis genome reveals fundamental similarities between animal and plant pathogens and symbionts.</title>
        <authorList>
            <person name="Paulsen I.T."/>
            <person name="Seshadri R."/>
            <person name="Nelson K.E."/>
            <person name="Eisen J.A."/>
            <person name="Heidelberg J.F."/>
            <person name="Read T.D."/>
            <person name="Dodson R.J."/>
            <person name="Umayam L.A."/>
            <person name="Brinkac L.M."/>
            <person name="Beanan M.J."/>
            <person name="Daugherty S.C."/>
            <person name="DeBoy R.T."/>
            <person name="Durkin A.S."/>
            <person name="Kolonay J.F."/>
            <person name="Madupu R."/>
            <person name="Nelson W.C."/>
            <person name="Ayodeji B."/>
            <person name="Kraul M."/>
            <person name="Shetty J."/>
            <person name="Malek J.A."/>
            <person name="Van Aken S.E."/>
            <person name="Riedmuller S."/>
            <person name="Tettelin H."/>
            <person name="Gill S.R."/>
            <person name="White O."/>
            <person name="Salzberg S.L."/>
            <person name="Hoover D.L."/>
            <person name="Lindler L.E."/>
            <person name="Halling S.M."/>
            <person name="Boyle S.M."/>
            <person name="Fraser C.M."/>
        </authorList>
    </citation>
    <scope>NUCLEOTIDE SEQUENCE [LARGE SCALE GENOMIC DNA]</scope>
    <source>
        <strain>1330</strain>
    </source>
</reference>
<reference key="2">
    <citation type="journal article" date="2011" name="J. Bacteriol.">
        <title>Revised genome sequence of Brucella suis 1330.</title>
        <authorList>
            <person name="Tae H."/>
            <person name="Shallom S."/>
            <person name="Settlage R."/>
            <person name="Preston D."/>
            <person name="Adams L.G."/>
            <person name="Garner H.R."/>
        </authorList>
    </citation>
    <scope>NUCLEOTIDE SEQUENCE [LARGE SCALE GENOMIC DNA]</scope>
    <source>
        <strain>1330</strain>
    </source>
</reference>
<organism>
    <name type="scientific">Brucella suis biovar 1 (strain 1330)</name>
    <dbReference type="NCBI Taxonomy" id="204722"/>
    <lineage>
        <taxon>Bacteria</taxon>
        <taxon>Pseudomonadati</taxon>
        <taxon>Pseudomonadota</taxon>
        <taxon>Alphaproteobacteria</taxon>
        <taxon>Hyphomicrobiales</taxon>
        <taxon>Brucellaceae</taxon>
        <taxon>Brucella/Ochrobactrum group</taxon>
        <taxon>Brucella</taxon>
    </lineage>
</organism>
<feature type="chain" id="PRO_0000157402" description="UPF0324 membrane protein BR0028/BS1330_I0028">
    <location>
        <begin position="1"/>
        <end position="336"/>
    </location>
</feature>
<feature type="transmembrane region" description="Helical" evidence="1">
    <location>
        <begin position="9"/>
        <end position="26"/>
    </location>
</feature>
<feature type="transmembrane region" description="Helical" evidence="1">
    <location>
        <begin position="36"/>
        <end position="55"/>
    </location>
</feature>
<feature type="transmembrane region" description="Helical" evidence="1">
    <location>
        <begin position="68"/>
        <end position="90"/>
    </location>
</feature>
<feature type="transmembrane region" description="Helical" evidence="1">
    <location>
        <begin position="94"/>
        <end position="116"/>
    </location>
</feature>
<feature type="transmembrane region" description="Helical" evidence="1">
    <location>
        <begin position="128"/>
        <end position="150"/>
    </location>
</feature>
<feature type="transmembrane region" description="Helical" evidence="1">
    <location>
        <begin position="160"/>
        <end position="182"/>
    </location>
</feature>
<feature type="transmembrane region" description="Helical" evidence="1">
    <location>
        <begin position="189"/>
        <end position="211"/>
    </location>
</feature>
<feature type="transmembrane region" description="Helical" evidence="1">
    <location>
        <begin position="221"/>
        <end position="240"/>
    </location>
</feature>
<feature type="transmembrane region" description="Helical" evidence="1">
    <location>
        <begin position="247"/>
        <end position="269"/>
    </location>
</feature>
<feature type="transmembrane region" description="Helical" evidence="1">
    <location>
        <begin position="279"/>
        <end position="301"/>
    </location>
</feature>
<feature type="transmembrane region" description="Helical" evidence="1">
    <location>
        <begin position="313"/>
        <end position="335"/>
    </location>
</feature>
<proteinExistence type="inferred from homology"/>
<gene>
    <name type="ordered locus">BR0028</name>
    <name type="ordered locus">BS1330_I0028</name>
</gene>
<protein>
    <recommendedName>
        <fullName>UPF0324 membrane protein BR0028/BS1330_I0028</fullName>
    </recommendedName>
</protein>
<keyword id="KW-1003">Cell membrane</keyword>
<keyword id="KW-0472">Membrane</keyword>
<keyword id="KW-0812">Transmembrane</keyword>
<keyword id="KW-1133">Transmembrane helix</keyword>
<comment type="subcellular location">
    <subcellularLocation>
        <location evidence="2">Cell membrane</location>
        <topology evidence="2">Multi-pass membrane protein</topology>
    </subcellularLocation>
</comment>
<comment type="similarity">
    <text evidence="2">Belongs to the UPF0324 family.</text>
</comment>
<accession>Q8G3C1</accession>
<accession>G0KAK0</accession>
<dbReference type="EMBL" id="AE014291">
    <property type="protein sequence ID" value="AAN28985.1"/>
    <property type="molecule type" value="Genomic_DNA"/>
</dbReference>
<dbReference type="EMBL" id="CP002997">
    <property type="protein sequence ID" value="AEM17397.1"/>
    <property type="molecule type" value="Genomic_DNA"/>
</dbReference>
<dbReference type="KEGG" id="bms:BR0028"/>
<dbReference type="KEGG" id="bsi:BS1330_I0028"/>
<dbReference type="PATRIC" id="fig|204722.22.peg.1804"/>
<dbReference type="HOGENOM" id="CLU_033541_3_1_5"/>
<dbReference type="PhylomeDB" id="Q8G3C1"/>
<dbReference type="Proteomes" id="UP000007104">
    <property type="component" value="Chromosome I"/>
</dbReference>
<dbReference type="GO" id="GO:0005886">
    <property type="term" value="C:plasma membrane"/>
    <property type="evidence" value="ECO:0007669"/>
    <property type="project" value="UniProtKB-SubCell"/>
</dbReference>
<dbReference type="InterPro" id="IPR018383">
    <property type="entry name" value="UPF0324_pro"/>
</dbReference>
<dbReference type="PANTHER" id="PTHR30106">
    <property type="entry name" value="INNER MEMBRANE PROTEIN YEIH-RELATED"/>
    <property type="match status" value="1"/>
</dbReference>
<dbReference type="PANTHER" id="PTHR30106:SF2">
    <property type="entry name" value="UPF0324 INNER MEMBRANE PROTEIN YEIH"/>
    <property type="match status" value="1"/>
</dbReference>
<dbReference type="Pfam" id="PF03601">
    <property type="entry name" value="Cons_hypoth698"/>
    <property type="match status" value="1"/>
</dbReference>
<name>Y028_BRUSU</name>
<sequence>MTYSKIQNILPGLGLSVAITAAAMVLEKIEEHYAGRAWLEALVIAILLGTAVRSLARPGPRFNKGINFSAKLLLEIAVALLGASISASAVIEAGSGLIFGIAAVVAVAITLSYGIGRLLKLPHRMAVLVACGNSICGNSAIAAMAPVIGAESEDVAASIAFTAILGVIVVLTLPLLVPLLGLSFTQYGILAGLTVYAVPQVLAATAPVSLLSVQLGTLVKLVRVLMLGPVILVFALISGNKNADVKPGFFQLVPWFIIGFLAMMALHSLHLIPEAILPAIQYASMLLTIISMAALGLGVDIRSVASAGGRVTLTAILSLIALCCISLGLIHMLGVA</sequence>